<dbReference type="EC" id="3.6.5.3" evidence="2"/>
<dbReference type="EMBL" id="CP000786">
    <property type="protein sequence ID" value="ABZ98069.1"/>
    <property type="molecule type" value="Genomic_DNA"/>
</dbReference>
<dbReference type="RefSeq" id="WP_012388941.1">
    <property type="nucleotide sequence ID" value="NC_010602.1"/>
</dbReference>
<dbReference type="SMR" id="B0SSH9"/>
<dbReference type="STRING" id="456481.LEPBI_I1966"/>
<dbReference type="KEGG" id="lbi:LEPBI_I1966"/>
<dbReference type="HOGENOM" id="CLU_007265_0_0_12"/>
<dbReference type="OrthoDB" id="9804504at2"/>
<dbReference type="BioCyc" id="LBIF456481:LEPBI_RS09715-MONOMER"/>
<dbReference type="Proteomes" id="UP000001847">
    <property type="component" value="Chromosome I"/>
</dbReference>
<dbReference type="GO" id="GO:0005829">
    <property type="term" value="C:cytosol"/>
    <property type="evidence" value="ECO:0007669"/>
    <property type="project" value="TreeGrafter"/>
</dbReference>
<dbReference type="GO" id="GO:0005525">
    <property type="term" value="F:GTP binding"/>
    <property type="evidence" value="ECO:0007669"/>
    <property type="project" value="UniProtKB-UniRule"/>
</dbReference>
<dbReference type="GO" id="GO:0003924">
    <property type="term" value="F:GTPase activity"/>
    <property type="evidence" value="ECO:0007669"/>
    <property type="project" value="InterPro"/>
</dbReference>
<dbReference type="GO" id="GO:0003746">
    <property type="term" value="F:translation elongation factor activity"/>
    <property type="evidence" value="ECO:0007669"/>
    <property type="project" value="UniProtKB-UniRule"/>
</dbReference>
<dbReference type="CDD" id="cd01884">
    <property type="entry name" value="EF_Tu"/>
    <property type="match status" value="1"/>
</dbReference>
<dbReference type="CDD" id="cd03697">
    <property type="entry name" value="EFTU_II"/>
    <property type="match status" value="1"/>
</dbReference>
<dbReference type="CDD" id="cd03707">
    <property type="entry name" value="EFTU_III"/>
    <property type="match status" value="1"/>
</dbReference>
<dbReference type="FunFam" id="2.40.30.10:FF:000001">
    <property type="entry name" value="Elongation factor Tu"/>
    <property type="match status" value="1"/>
</dbReference>
<dbReference type="FunFam" id="3.40.50.300:FF:000003">
    <property type="entry name" value="Elongation factor Tu"/>
    <property type="match status" value="1"/>
</dbReference>
<dbReference type="Gene3D" id="3.40.50.300">
    <property type="entry name" value="P-loop containing nucleotide triphosphate hydrolases"/>
    <property type="match status" value="1"/>
</dbReference>
<dbReference type="Gene3D" id="2.40.30.10">
    <property type="entry name" value="Translation factors"/>
    <property type="match status" value="2"/>
</dbReference>
<dbReference type="HAMAP" id="MF_00118_B">
    <property type="entry name" value="EF_Tu_B"/>
    <property type="match status" value="1"/>
</dbReference>
<dbReference type="InterPro" id="IPR041709">
    <property type="entry name" value="EF-Tu_GTP-bd"/>
</dbReference>
<dbReference type="InterPro" id="IPR050055">
    <property type="entry name" value="EF-Tu_GTPase"/>
</dbReference>
<dbReference type="InterPro" id="IPR004161">
    <property type="entry name" value="EFTu-like_2"/>
</dbReference>
<dbReference type="InterPro" id="IPR033720">
    <property type="entry name" value="EFTU_2"/>
</dbReference>
<dbReference type="InterPro" id="IPR031157">
    <property type="entry name" value="G_TR_CS"/>
</dbReference>
<dbReference type="InterPro" id="IPR027417">
    <property type="entry name" value="P-loop_NTPase"/>
</dbReference>
<dbReference type="InterPro" id="IPR005225">
    <property type="entry name" value="Small_GTP-bd"/>
</dbReference>
<dbReference type="InterPro" id="IPR000795">
    <property type="entry name" value="T_Tr_GTP-bd_dom"/>
</dbReference>
<dbReference type="InterPro" id="IPR009000">
    <property type="entry name" value="Transl_B-barrel_sf"/>
</dbReference>
<dbReference type="InterPro" id="IPR009001">
    <property type="entry name" value="Transl_elong_EF1A/Init_IF2_C"/>
</dbReference>
<dbReference type="InterPro" id="IPR004541">
    <property type="entry name" value="Transl_elong_EFTu/EF1A_bac/org"/>
</dbReference>
<dbReference type="InterPro" id="IPR004160">
    <property type="entry name" value="Transl_elong_EFTu/EF1A_C"/>
</dbReference>
<dbReference type="NCBIfam" id="TIGR00485">
    <property type="entry name" value="EF-Tu"/>
    <property type="match status" value="1"/>
</dbReference>
<dbReference type="NCBIfam" id="NF000766">
    <property type="entry name" value="PRK00049.1"/>
    <property type="match status" value="1"/>
</dbReference>
<dbReference type="NCBIfam" id="NF009372">
    <property type="entry name" value="PRK12735.1"/>
    <property type="match status" value="1"/>
</dbReference>
<dbReference type="NCBIfam" id="NF009373">
    <property type="entry name" value="PRK12736.1"/>
    <property type="match status" value="1"/>
</dbReference>
<dbReference type="NCBIfam" id="TIGR00231">
    <property type="entry name" value="small_GTP"/>
    <property type="match status" value="1"/>
</dbReference>
<dbReference type="PANTHER" id="PTHR43721:SF22">
    <property type="entry name" value="ELONGATION FACTOR TU, MITOCHONDRIAL"/>
    <property type="match status" value="1"/>
</dbReference>
<dbReference type="PANTHER" id="PTHR43721">
    <property type="entry name" value="ELONGATION FACTOR TU-RELATED"/>
    <property type="match status" value="1"/>
</dbReference>
<dbReference type="Pfam" id="PF00009">
    <property type="entry name" value="GTP_EFTU"/>
    <property type="match status" value="1"/>
</dbReference>
<dbReference type="Pfam" id="PF03144">
    <property type="entry name" value="GTP_EFTU_D2"/>
    <property type="match status" value="1"/>
</dbReference>
<dbReference type="Pfam" id="PF03143">
    <property type="entry name" value="GTP_EFTU_D3"/>
    <property type="match status" value="1"/>
</dbReference>
<dbReference type="PRINTS" id="PR00315">
    <property type="entry name" value="ELONGATNFCT"/>
</dbReference>
<dbReference type="SUPFAM" id="SSF50465">
    <property type="entry name" value="EF-Tu/eEF-1alpha/eIF2-gamma C-terminal domain"/>
    <property type="match status" value="1"/>
</dbReference>
<dbReference type="SUPFAM" id="SSF52540">
    <property type="entry name" value="P-loop containing nucleoside triphosphate hydrolases"/>
    <property type="match status" value="1"/>
</dbReference>
<dbReference type="SUPFAM" id="SSF50447">
    <property type="entry name" value="Translation proteins"/>
    <property type="match status" value="1"/>
</dbReference>
<dbReference type="PROSITE" id="PS00301">
    <property type="entry name" value="G_TR_1"/>
    <property type="match status" value="1"/>
</dbReference>
<dbReference type="PROSITE" id="PS51722">
    <property type="entry name" value="G_TR_2"/>
    <property type="match status" value="1"/>
</dbReference>
<gene>
    <name evidence="2" type="primary">tuf</name>
    <name type="ordered locus">LEPBI_I1966</name>
</gene>
<accession>B0SSH9</accession>
<organism>
    <name type="scientific">Leptospira biflexa serovar Patoc (strain Patoc 1 / ATCC 23582 / Paris)</name>
    <dbReference type="NCBI Taxonomy" id="456481"/>
    <lineage>
        <taxon>Bacteria</taxon>
        <taxon>Pseudomonadati</taxon>
        <taxon>Spirochaetota</taxon>
        <taxon>Spirochaetia</taxon>
        <taxon>Leptospirales</taxon>
        <taxon>Leptospiraceae</taxon>
        <taxon>Leptospira</taxon>
    </lineage>
</organism>
<comment type="function">
    <text evidence="2">GTP hydrolase that promotes the GTP-dependent binding of aminoacyl-tRNA to the A-site of ribosomes during protein biosynthesis.</text>
</comment>
<comment type="catalytic activity">
    <reaction evidence="2">
        <text>GTP + H2O = GDP + phosphate + H(+)</text>
        <dbReference type="Rhea" id="RHEA:19669"/>
        <dbReference type="ChEBI" id="CHEBI:15377"/>
        <dbReference type="ChEBI" id="CHEBI:15378"/>
        <dbReference type="ChEBI" id="CHEBI:37565"/>
        <dbReference type="ChEBI" id="CHEBI:43474"/>
        <dbReference type="ChEBI" id="CHEBI:58189"/>
        <dbReference type="EC" id="3.6.5.3"/>
    </reaction>
    <physiologicalReaction direction="left-to-right" evidence="2">
        <dbReference type="Rhea" id="RHEA:19670"/>
    </physiologicalReaction>
</comment>
<comment type="subunit">
    <text evidence="2">Monomer.</text>
</comment>
<comment type="subcellular location">
    <subcellularLocation>
        <location evidence="2">Cytoplasm</location>
    </subcellularLocation>
</comment>
<comment type="similarity">
    <text evidence="2">Belongs to the TRAFAC class translation factor GTPase superfamily. Classic translation factor GTPase family. EF-Tu/EF-1A subfamily.</text>
</comment>
<feature type="chain" id="PRO_1000095073" description="Elongation factor Tu">
    <location>
        <begin position="1"/>
        <end position="401"/>
    </location>
</feature>
<feature type="domain" description="tr-type G">
    <location>
        <begin position="10"/>
        <end position="211"/>
    </location>
</feature>
<feature type="region of interest" description="G1" evidence="1">
    <location>
        <begin position="19"/>
        <end position="26"/>
    </location>
</feature>
<feature type="region of interest" description="G2" evidence="1">
    <location>
        <begin position="62"/>
        <end position="66"/>
    </location>
</feature>
<feature type="region of interest" description="G3" evidence="1">
    <location>
        <begin position="83"/>
        <end position="86"/>
    </location>
</feature>
<feature type="region of interest" description="G4" evidence="1">
    <location>
        <begin position="138"/>
        <end position="141"/>
    </location>
</feature>
<feature type="region of interest" description="G5" evidence="1">
    <location>
        <begin position="179"/>
        <end position="181"/>
    </location>
</feature>
<feature type="binding site" evidence="2">
    <location>
        <begin position="19"/>
        <end position="26"/>
    </location>
    <ligand>
        <name>GTP</name>
        <dbReference type="ChEBI" id="CHEBI:37565"/>
    </ligand>
</feature>
<feature type="binding site" evidence="2">
    <location>
        <position position="26"/>
    </location>
    <ligand>
        <name>Mg(2+)</name>
        <dbReference type="ChEBI" id="CHEBI:18420"/>
    </ligand>
</feature>
<feature type="binding site" evidence="2">
    <location>
        <begin position="83"/>
        <end position="87"/>
    </location>
    <ligand>
        <name>GTP</name>
        <dbReference type="ChEBI" id="CHEBI:37565"/>
    </ligand>
</feature>
<feature type="binding site" evidence="2">
    <location>
        <begin position="138"/>
        <end position="141"/>
    </location>
    <ligand>
        <name>GTP</name>
        <dbReference type="ChEBI" id="CHEBI:37565"/>
    </ligand>
</feature>
<reference key="1">
    <citation type="journal article" date="2008" name="PLoS ONE">
        <title>Genome sequence of the saprophyte Leptospira biflexa provides insights into the evolution of Leptospira and the pathogenesis of leptospirosis.</title>
        <authorList>
            <person name="Picardeau M."/>
            <person name="Bulach D.M."/>
            <person name="Bouchier C."/>
            <person name="Zuerner R.L."/>
            <person name="Zidane N."/>
            <person name="Wilson P.J."/>
            <person name="Creno S."/>
            <person name="Kuczek E.S."/>
            <person name="Bommezzadri S."/>
            <person name="Davis J.C."/>
            <person name="McGrath A."/>
            <person name="Johnson M.J."/>
            <person name="Boursaux-Eude C."/>
            <person name="Seemann T."/>
            <person name="Rouy Z."/>
            <person name="Coppel R.L."/>
            <person name="Rood J.I."/>
            <person name="Lajus A."/>
            <person name="Davies J.K."/>
            <person name="Medigue C."/>
            <person name="Adler B."/>
        </authorList>
    </citation>
    <scope>NUCLEOTIDE SEQUENCE [LARGE SCALE GENOMIC DNA]</scope>
    <source>
        <strain>Patoc 1 / ATCC 23582 / Paris</strain>
    </source>
</reference>
<sequence length="401" mass="43925">MAKEKFDRSKPHLNIGTIGHVDHGKTTLTAAITTTLAKLVGGKNKAIAYDQIDNAPEEKARGITIATSHQEYETPNRHYAHVDCPGHADYVKNMITGAAQMDAAILVVSATDGAMPQTKEHILLARQVGVPYIVVYLNKADMLAADERDDMVEMVKEEIKDLLNKYNFPGDKTPFISGSALKALEGEDSDLGMKSILKLMEAVDTYVPNPTRIVDKPFLMPVEDVFSITGRGTVATGRVEQGVLKINDEIEIVGIRDTTKSVVTGIEMFRKLLDQAEAGDNIGALLRGTKKEDIERGQVLAKPGTITPHRKFKAEVYVLTKDEGGRHTPFFNNYRPQFYFRTTDITGVCNLPGGMEMVMPGDNVTMSIELIHPIAMDQGLKFAIREGGRTIGSGVVAEIVE</sequence>
<name>EFTU_LEPBP</name>
<protein>
    <recommendedName>
        <fullName evidence="2">Elongation factor Tu</fullName>
        <shortName evidence="2">EF-Tu</shortName>
        <ecNumber evidence="2">3.6.5.3</ecNumber>
    </recommendedName>
</protein>
<keyword id="KW-0963">Cytoplasm</keyword>
<keyword id="KW-0251">Elongation factor</keyword>
<keyword id="KW-0342">GTP-binding</keyword>
<keyword id="KW-0378">Hydrolase</keyword>
<keyword id="KW-0460">Magnesium</keyword>
<keyword id="KW-0479">Metal-binding</keyword>
<keyword id="KW-0547">Nucleotide-binding</keyword>
<keyword id="KW-0648">Protein biosynthesis</keyword>
<keyword id="KW-1185">Reference proteome</keyword>
<proteinExistence type="inferred from homology"/>
<evidence type="ECO:0000250" key="1"/>
<evidence type="ECO:0000255" key="2">
    <source>
        <dbReference type="HAMAP-Rule" id="MF_00118"/>
    </source>
</evidence>